<comment type="function">
    <text evidence="1">Catalyzes the transfer of the enolpyruvyl moiety of phosphoenolpyruvate (PEP) to the 5-hydroxyl of shikimate-3-phosphate (S3P) to produce enolpyruvyl shikimate-3-phosphate and inorganic phosphate.</text>
</comment>
<comment type="catalytic activity">
    <reaction evidence="1">
        <text>3-phosphoshikimate + phosphoenolpyruvate = 5-O-(1-carboxyvinyl)-3-phosphoshikimate + phosphate</text>
        <dbReference type="Rhea" id="RHEA:21256"/>
        <dbReference type="ChEBI" id="CHEBI:43474"/>
        <dbReference type="ChEBI" id="CHEBI:57701"/>
        <dbReference type="ChEBI" id="CHEBI:58702"/>
        <dbReference type="ChEBI" id="CHEBI:145989"/>
        <dbReference type="EC" id="2.5.1.19"/>
    </reaction>
    <physiologicalReaction direction="left-to-right" evidence="1">
        <dbReference type="Rhea" id="RHEA:21257"/>
    </physiologicalReaction>
</comment>
<comment type="pathway">
    <text evidence="1">Metabolic intermediate biosynthesis; chorismate biosynthesis; chorismate from D-erythrose 4-phosphate and phosphoenolpyruvate: step 6/7.</text>
</comment>
<comment type="subunit">
    <text evidence="1">Monomer.</text>
</comment>
<comment type="subcellular location">
    <subcellularLocation>
        <location evidence="1">Cytoplasm</location>
    </subcellularLocation>
</comment>
<comment type="similarity">
    <text evidence="1">Belongs to the EPSP synthase family.</text>
</comment>
<feature type="chain" id="PRO_1000099709" description="3-phosphoshikimate 1-carboxyvinyltransferase">
    <location>
        <begin position="1"/>
        <end position="427"/>
    </location>
</feature>
<feature type="active site" description="Proton acceptor" evidence="1">
    <location>
        <position position="313"/>
    </location>
</feature>
<feature type="binding site" evidence="1">
    <location>
        <position position="22"/>
    </location>
    <ligand>
        <name>3-phosphoshikimate</name>
        <dbReference type="ChEBI" id="CHEBI:145989"/>
    </ligand>
</feature>
<feature type="binding site" evidence="1">
    <location>
        <position position="22"/>
    </location>
    <ligand>
        <name>phosphoenolpyruvate</name>
        <dbReference type="ChEBI" id="CHEBI:58702"/>
    </ligand>
</feature>
<feature type="binding site" evidence="1">
    <location>
        <position position="23"/>
    </location>
    <ligand>
        <name>3-phosphoshikimate</name>
        <dbReference type="ChEBI" id="CHEBI:145989"/>
    </ligand>
</feature>
<feature type="binding site" evidence="1">
    <location>
        <position position="27"/>
    </location>
    <ligand>
        <name>3-phosphoshikimate</name>
        <dbReference type="ChEBI" id="CHEBI:145989"/>
    </ligand>
</feature>
<feature type="binding site" evidence="1">
    <location>
        <position position="96"/>
    </location>
    <ligand>
        <name>phosphoenolpyruvate</name>
        <dbReference type="ChEBI" id="CHEBI:58702"/>
    </ligand>
</feature>
<feature type="binding site" evidence="1">
    <location>
        <position position="124"/>
    </location>
    <ligand>
        <name>phosphoenolpyruvate</name>
        <dbReference type="ChEBI" id="CHEBI:58702"/>
    </ligand>
</feature>
<feature type="binding site" evidence="1">
    <location>
        <position position="169"/>
    </location>
    <ligand>
        <name>3-phosphoshikimate</name>
        <dbReference type="ChEBI" id="CHEBI:145989"/>
    </ligand>
</feature>
<feature type="binding site" evidence="1">
    <location>
        <position position="170"/>
    </location>
    <ligand>
        <name>3-phosphoshikimate</name>
        <dbReference type="ChEBI" id="CHEBI:145989"/>
    </ligand>
</feature>
<feature type="binding site" evidence="1">
    <location>
        <position position="171"/>
    </location>
    <ligand>
        <name>3-phosphoshikimate</name>
        <dbReference type="ChEBI" id="CHEBI:145989"/>
    </ligand>
</feature>
<feature type="binding site" evidence="1">
    <location>
        <position position="171"/>
    </location>
    <ligand>
        <name>phosphoenolpyruvate</name>
        <dbReference type="ChEBI" id="CHEBI:58702"/>
    </ligand>
</feature>
<feature type="binding site" evidence="1">
    <location>
        <position position="197"/>
    </location>
    <ligand>
        <name>3-phosphoshikimate</name>
        <dbReference type="ChEBI" id="CHEBI:145989"/>
    </ligand>
</feature>
<feature type="binding site" evidence="1">
    <location>
        <position position="313"/>
    </location>
    <ligand>
        <name>3-phosphoshikimate</name>
        <dbReference type="ChEBI" id="CHEBI:145989"/>
    </ligand>
</feature>
<feature type="binding site" evidence="1">
    <location>
        <position position="336"/>
    </location>
    <ligand>
        <name>3-phosphoshikimate</name>
        <dbReference type="ChEBI" id="CHEBI:145989"/>
    </ligand>
</feature>
<feature type="binding site" evidence="1">
    <location>
        <position position="340"/>
    </location>
    <ligand>
        <name>3-phosphoshikimate</name>
        <dbReference type="ChEBI" id="CHEBI:145989"/>
    </ligand>
</feature>
<feature type="binding site" evidence="1">
    <location>
        <position position="344"/>
    </location>
    <ligand>
        <name>phosphoenolpyruvate</name>
        <dbReference type="ChEBI" id="CHEBI:58702"/>
    </ligand>
</feature>
<feature type="binding site" evidence="1">
    <location>
        <position position="386"/>
    </location>
    <ligand>
        <name>phosphoenolpyruvate</name>
        <dbReference type="ChEBI" id="CHEBI:58702"/>
    </ligand>
</feature>
<feature type="binding site" evidence="1">
    <location>
        <position position="411"/>
    </location>
    <ligand>
        <name>phosphoenolpyruvate</name>
        <dbReference type="ChEBI" id="CHEBI:58702"/>
    </ligand>
</feature>
<gene>
    <name evidence="1" type="primary">aroA</name>
    <name type="ordered locus">KPK_3623</name>
</gene>
<name>AROA_KLEP3</name>
<accession>B5XY87</accession>
<reference key="1">
    <citation type="journal article" date="2008" name="PLoS Genet.">
        <title>Complete genome sequence of the N2-fixing broad host range endophyte Klebsiella pneumoniae 342 and virulence predictions verified in mice.</title>
        <authorList>
            <person name="Fouts D.E."/>
            <person name="Tyler H.L."/>
            <person name="DeBoy R.T."/>
            <person name="Daugherty S."/>
            <person name="Ren Q."/>
            <person name="Badger J.H."/>
            <person name="Durkin A.S."/>
            <person name="Huot H."/>
            <person name="Shrivastava S."/>
            <person name="Kothari S."/>
            <person name="Dodson R.J."/>
            <person name="Mohamoud Y."/>
            <person name="Khouri H."/>
            <person name="Roesch L.F.W."/>
            <person name="Krogfelt K.A."/>
            <person name="Struve C."/>
            <person name="Triplett E.W."/>
            <person name="Methe B.A."/>
        </authorList>
    </citation>
    <scope>NUCLEOTIDE SEQUENCE [LARGE SCALE GENOMIC DNA]</scope>
    <source>
        <strain>342</strain>
    </source>
</reference>
<sequence length="427" mass="46031">MESLTLQPIARVEGTVNLPGSKSVSNRALLLAALARGTTVLTNLLDSDDVRHMLNALSALGVQYTLSADRTRCEVTGNGGPLRAAAALELFLGNAGTAMRPLAAALCLGSNDIVLTGEPRMKERPIGHLVDALRQGGAQIDYLEQENYPPLRLRGGFQGGNVEVDGSVSSQFLTALLMTAPLAPQDTVIAIKGDLVSKPYIDITLHLMKTFGVEVDNQSYQRFVVRGKQQYQSPGDYLVEGDASSASYFLAAGAIKGGTVKVTGIGRGSVQGDIRFADVLEKMGATVTWGDDFIACTRGELKAIDMDMNHIPDAAMTIATAALFAQGTTTLRNIYNWRVKETDRLFAMATELRKVGAEVEEGEDYIRITPPAKLKYAEIGTYNDHRMAMCFSLVALSDTPVTILDPKCTAKTFPDYFEQLARISTLA</sequence>
<dbReference type="EC" id="2.5.1.19" evidence="1"/>
<dbReference type="EMBL" id="CP000964">
    <property type="protein sequence ID" value="ACI11715.1"/>
    <property type="molecule type" value="Genomic_DNA"/>
</dbReference>
<dbReference type="SMR" id="B5XY87"/>
<dbReference type="KEGG" id="kpe:KPK_3623"/>
<dbReference type="HOGENOM" id="CLU_024321_0_0_6"/>
<dbReference type="UniPathway" id="UPA00053">
    <property type="reaction ID" value="UER00089"/>
</dbReference>
<dbReference type="Proteomes" id="UP000001734">
    <property type="component" value="Chromosome"/>
</dbReference>
<dbReference type="GO" id="GO:0005737">
    <property type="term" value="C:cytoplasm"/>
    <property type="evidence" value="ECO:0007669"/>
    <property type="project" value="UniProtKB-SubCell"/>
</dbReference>
<dbReference type="GO" id="GO:0003866">
    <property type="term" value="F:3-phosphoshikimate 1-carboxyvinyltransferase activity"/>
    <property type="evidence" value="ECO:0007669"/>
    <property type="project" value="UniProtKB-UniRule"/>
</dbReference>
<dbReference type="GO" id="GO:0008652">
    <property type="term" value="P:amino acid biosynthetic process"/>
    <property type="evidence" value="ECO:0007669"/>
    <property type="project" value="UniProtKB-KW"/>
</dbReference>
<dbReference type="GO" id="GO:0009073">
    <property type="term" value="P:aromatic amino acid family biosynthetic process"/>
    <property type="evidence" value="ECO:0007669"/>
    <property type="project" value="UniProtKB-KW"/>
</dbReference>
<dbReference type="GO" id="GO:0009423">
    <property type="term" value="P:chorismate biosynthetic process"/>
    <property type="evidence" value="ECO:0007669"/>
    <property type="project" value="UniProtKB-UniRule"/>
</dbReference>
<dbReference type="CDD" id="cd01556">
    <property type="entry name" value="EPSP_synthase"/>
    <property type="match status" value="1"/>
</dbReference>
<dbReference type="FunFam" id="3.65.10.10:FF:000003">
    <property type="entry name" value="3-phosphoshikimate 1-carboxyvinyltransferase"/>
    <property type="match status" value="1"/>
</dbReference>
<dbReference type="FunFam" id="3.65.10.10:FF:000004">
    <property type="entry name" value="3-phosphoshikimate 1-carboxyvinyltransferase"/>
    <property type="match status" value="1"/>
</dbReference>
<dbReference type="Gene3D" id="3.65.10.10">
    <property type="entry name" value="Enolpyruvate transferase domain"/>
    <property type="match status" value="2"/>
</dbReference>
<dbReference type="HAMAP" id="MF_00210">
    <property type="entry name" value="EPSP_synth"/>
    <property type="match status" value="1"/>
</dbReference>
<dbReference type="InterPro" id="IPR001986">
    <property type="entry name" value="Enolpyruvate_Tfrase_dom"/>
</dbReference>
<dbReference type="InterPro" id="IPR036968">
    <property type="entry name" value="Enolpyruvate_Tfrase_sf"/>
</dbReference>
<dbReference type="InterPro" id="IPR006264">
    <property type="entry name" value="EPSP_synthase"/>
</dbReference>
<dbReference type="InterPro" id="IPR023193">
    <property type="entry name" value="EPSP_synthase_CS"/>
</dbReference>
<dbReference type="InterPro" id="IPR013792">
    <property type="entry name" value="RNA3'P_cycl/enolpyr_Trfase_a/b"/>
</dbReference>
<dbReference type="NCBIfam" id="TIGR01356">
    <property type="entry name" value="aroA"/>
    <property type="match status" value="1"/>
</dbReference>
<dbReference type="PANTHER" id="PTHR21090">
    <property type="entry name" value="AROM/DEHYDROQUINATE SYNTHASE"/>
    <property type="match status" value="1"/>
</dbReference>
<dbReference type="PANTHER" id="PTHR21090:SF5">
    <property type="entry name" value="PENTAFUNCTIONAL AROM POLYPEPTIDE"/>
    <property type="match status" value="1"/>
</dbReference>
<dbReference type="Pfam" id="PF00275">
    <property type="entry name" value="EPSP_synthase"/>
    <property type="match status" value="1"/>
</dbReference>
<dbReference type="PIRSF" id="PIRSF000505">
    <property type="entry name" value="EPSPS"/>
    <property type="match status" value="1"/>
</dbReference>
<dbReference type="SUPFAM" id="SSF55205">
    <property type="entry name" value="EPT/RTPC-like"/>
    <property type="match status" value="1"/>
</dbReference>
<dbReference type="PROSITE" id="PS00104">
    <property type="entry name" value="EPSP_SYNTHASE_1"/>
    <property type="match status" value="1"/>
</dbReference>
<dbReference type="PROSITE" id="PS00885">
    <property type="entry name" value="EPSP_SYNTHASE_2"/>
    <property type="match status" value="1"/>
</dbReference>
<evidence type="ECO:0000255" key="1">
    <source>
        <dbReference type="HAMAP-Rule" id="MF_00210"/>
    </source>
</evidence>
<protein>
    <recommendedName>
        <fullName evidence="1">3-phosphoshikimate 1-carboxyvinyltransferase</fullName>
        <ecNumber evidence="1">2.5.1.19</ecNumber>
    </recommendedName>
    <alternativeName>
        <fullName evidence="1">5-enolpyruvylshikimate-3-phosphate synthase</fullName>
        <shortName evidence="1">EPSP synthase</shortName>
        <shortName evidence="1">EPSPS</shortName>
    </alternativeName>
</protein>
<organism>
    <name type="scientific">Klebsiella pneumoniae (strain 342)</name>
    <dbReference type="NCBI Taxonomy" id="507522"/>
    <lineage>
        <taxon>Bacteria</taxon>
        <taxon>Pseudomonadati</taxon>
        <taxon>Pseudomonadota</taxon>
        <taxon>Gammaproteobacteria</taxon>
        <taxon>Enterobacterales</taxon>
        <taxon>Enterobacteriaceae</taxon>
        <taxon>Klebsiella/Raoultella group</taxon>
        <taxon>Klebsiella</taxon>
        <taxon>Klebsiella pneumoniae complex</taxon>
    </lineage>
</organism>
<proteinExistence type="inferred from homology"/>
<keyword id="KW-0028">Amino-acid biosynthesis</keyword>
<keyword id="KW-0057">Aromatic amino acid biosynthesis</keyword>
<keyword id="KW-0963">Cytoplasm</keyword>
<keyword id="KW-0808">Transferase</keyword>